<feature type="chain" id="PRO_0000461383" description="Peptidoglycan D,D-transpeptidase MrdA">
    <location>
        <begin position="1"/>
        <end position="672"/>
    </location>
</feature>
<feature type="transmembrane region" description="Helical" evidence="1">
    <location>
        <begin position="21"/>
        <end position="41"/>
    </location>
</feature>
<feature type="region of interest" description="Disordered" evidence="2">
    <location>
        <begin position="616"/>
        <end position="672"/>
    </location>
</feature>
<feature type="compositionally biased region" description="Low complexity" evidence="2">
    <location>
        <begin position="640"/>
        <end position="672"/>
    </location>
</feature>
<feature type="active site" description="Acyl-ester intermediate" evidence="1">
    <location>
        <position position="326"/>
    </location>
</feature>
<feature type="binding site" evidence="3 8">
    <location>
        <position position="350"/>
    </location>
    <ligand>
        <name>Zn(2+)</name>
        <dbReference type="ChEBI" id="CHEBI:29105"/>
    </ligand>
</feature>
<feature type="binding site" evidence="3 8">
    <location>
        <position position="365"/>
    </location>
    <ligand>
        <name>Zn(2+)</name>
        <dbReference type="ChEBI" id="CHEBI:29105"/>
    </ligand>
</feature>
<feature type="binding site" evidence="3 8">
    <location>
        <position position="371"/>
    </location>
    <ligand>
        <name>Zn(2+)</name>
        <dbReference type="ChEBI" id="CHEBI:29105"/>
    </ligand>
</feature>
<feature type="binding site" evidence="3 8">
    <location>
        <position position="384"/>
    </location>
    <ligand>
        <name>Zn(2+)</name>
        <dbReference type="ChEBI" id="CHEBI:29105"/>
    </ligand>
</feature>
<feature type="mutagenesis site" description="Decreased zinc-binding. Decreased structural stability. Loss of short-rod shape coincident with increased cell width. No effect on binding to fluorescent beta-lactam bocillin. Lower minimum inhibitory concentration (MIC) to the beta-lactams sulbactam and piperacillin-tazobactam compared to wild-type." evidence="3">
    <original>D</original>
    <variation>A</variation>
    <location>
        <position position="350"/>
    </location>
</feature>
<feature type="mutagenesis site" description="Decreased zinc-binding. Decreased structural stability. Loss of short-rod shape coincident with increased cell width. No effect on binding to fluorescent beta-lactam bocillin. Lower minimum inhibitory concentration (MIC) to the beta-lactams sulbactam and piperacillin-tazobactam compared to wild-type." evidence="3">
    <original>D</original>
    <variation>A</variation>
    <location>
        <position position="365"/>
    </location>
</feature>
<feature type="mutagenesis site" description="Decreased zinc-binding. Decreased structural stability. Loss of short-rod shape coincident with increased cell width. No effect on binding to fluorescent beta-lactam bocillin. Lower minimum inhibitory concentration (MIC) to the beta-lactams sulbactam and piperacillin-tazobactam compared to wild-type." evidence="3">
    <original>H</original>
    <variation>A</variation>
    <location>
        <position position="371"/>
    </location>
</feature>
<feature type="mutagenesis site" description="Nearly complete loss of zinc-binding. Decreased structural stability. Loss of short-rod shape coincident with increased cell width. No effect on binding to fluorescent beta-lactam bocillin. Lower minimum inhibitory concentration (MIC) to the beta-lactams sulbactam and piperacillin-tazobactam compared to wild-type." evidence="3">
    <original>C</original>
    <variation>A</variation>
    <location>
        <position position="384"/>
    </location>
</feature>
<feature type="strand" evidence="9">
    <location>
        <begin position="78"/>
        <end position="89"/>
    </location>
</feature>
<feature type="helix" evidence="9">
    <location>
        <begin position="92"/>
        <end position="94"/>
    </location>
</feature>
<feature type="helix" evidence="9">
    <location>
        <begin position="98"/>
        <end position="109"/>
    </location>
</feature>
<feature type="helix" evidence="9">
    <location>
        <begin position="113"/>
        <end position="125"/>
    </location>
</feature>
<feature type="strand" evidence="9">
    <location>
        <begin position="128"/>
        <end position="130"/>
    </location>
</feature>
<feature type="strand" evidence="9">
    <location>
        <begin position="134"/>
        <end position="137"/>
    </location>
</feature>
<feature type="helix" evidence="9">
    <location>
        <begin position="140"/>
        <end position="147"/>
    </location>
</feature>
<feature type="helix" evidence="9">
    <location>
        <begin position="148"/>
        <end position="152"/>
    </location>
</feature>
<feature type="strand" evidence="9">
    <location>
        <begin position="153"/>
        <end position="155"/>
    </location>
</feature>
<feature type="strand" evidence="9">
    <location>
        <begin position="157"/>
        <end position="165"/>
    </location>
</feature>
<feature type="helix" evidence="9">
    <location>
        <begin position="169"/>
        <end position="176"/>
    </location>
</feature>
<feature type="strand" evidence="9">
    <location>
        <begin position="178"/>
        <end position="181"/>
    </location>
</feature>
<feature type="helix" evidence="9">
    <location>
        <begin position="184"/>
        <end position="187"/>
    </location>
</feature>
<feature type="turn" evidence="9">
    <location>
        <begin position="194"/>
        <end position="197"/>
    </location>
</feature>
<feature type="strand" evidence="9">
    <location>
        <begin position="200"/>
        <end position="204"/>
    </location>
</feature>
<feature type="helix" evidence="9">
    <location>
        <begin position="205"/>
        <end position="209"/>
    </location>
</feature>
<feature type="helix" evidence="9">
    <location>
        <begin position="211"/>
        <end position="215"/>
    </location>
</feature>
<feature type="strand" evidence="9">
    <location>
        <begin position="245"/>
        <end position="249"/>
    </location>
</feature>
<feature type="helix" evidence="9">
    <location>
        <begin position="252"/>
        <end position="262"/>
    </location>
</feature>
<feature type="strand" evidence="9">
    <location>
        <begin position="267"/>
        <end position="272"/>
    </location>
</feature>
<feature type="turn" evidence="9">
    <location>
        <begin position="274"/>
        <end position="276"/>
    </location>
</feature>
<feature type="strand" evidence="9">
    <location>
        <begin position="278"/>
        <end position="286"/>
    </location>
</feature>
<feature type="helix" evidence="9">
    <location>
        <begin position="290"/>
        <end position="293"/>
    </location>
</feature>
<feature type="helix" evidence="9">
    <location>
        <begin position="299"/>
        <end position="306"/>
    </location>
</feature>
<feature type="turn" evidence="9">
    <location>
        <begin position="316"/>
        <end position="319"/>
    </location>
</feature>
<feature type="helix" evidence="9">
    <location>
        <begin position="325"/>
        <end position="328"/>
    </location>
</feature>
<feature type="helix" evidence="9">
    <location>
        <begin position="329"/>
        <end position="338"/>
    </location>
</feature>
<feature type="strand" evidence="9">
    <location>
        <begin position="348"/>
        <end position="350"/>
    </location>
</feature>
<feature type="strand" evidence="9">
    <location>
        <begin position="352"/>
        <end position="355"/>
    </location>
</feature>
<feature type="strand" evidence="9">
    <location>
        <begin position="362"/>
        <end position="364"/>
    </location>
</feature>
<feature type="strand" evidence="9">
    <location>
        <begin position="372"/>
        <end position="374"/>
    </location>
</feature>
<feature type="helix" evidence="9">
    <location>
        <begin position="376"/>
        <end position="382"/>
    </location>
</feature>
<feature type="helix" evidence="9">
    <location>
        <begin position="386"/>
        <end position="404"/>
    </location>
</feature>
<feature type="helix" evidence="9">
    <location>
        <begin position="405"/>
        <end position="407"/>
    </location>
</feature>
<feature type="turn" evidence="9">
    <location>
        <begin position="408"/>
        <end position="410"/>
    </location>
</feature>
<feature type="helix" evidence="9">
    <location>
        <begin position="428"/>
        <end position="434"/>
    </location>
</feature>
<feature type="helix" evidence="9">
    <location>
        <begin position="441"/>
        <end position="448"/>
    </location>
</feature>
<feature type="helix" evidence="9">
    <location>
        <begin position="458"/>
        <end position="469"/>
    </location>
</feature>
<feature type="strand" evidence="9">
    <location>
        <begin position="472"/>
        <end position="474"/>
    </location>
</feature>
<feature type="strand" evidence="9">
    <location>
        <begin position="480"/>
        <end position="487"/>
    </location>
</feature>
<feature type="strand" evidence="9">
    <location>
        <begin position="497"/>
        <end position="499"/>
    </location>
</feature>
<feature type="helix" evidence="9">
    <location>
        <begin position="505"/>
        <end position="520"/>
    </location>
</feature>
<feature type="strand" evidence="9">
    <location>
        <begin position="530"/>
        <end position="532"/>
    </location>
</feature>
<feature type="strand" evidence="9">
    <location>
        <begin position="535"/>
        <end position="541"/>
    </location>
</feature>
<feature type="strand" evidence="9">
    <location>
        <begin position="564"/>
        <end position="575"/>
    </location>
</feature>
<feature type="strand" evidence="9">
    <location>
        <begin position="578"/>
        <end position="584"/>
    </location>
</feature>
<feature type="helix" evidence="9">
    <location>
        <begin position="590"/>
        <end position="605"/>
    </location>
</feature>
<sequence length="672" mass="74452">MKQHFPLKDIQQEKRIYRGRIFFAVGLVIICLLVLASRYAYLQIFHYDEFSTASDKNRIRLQPLPPARGYIYDRNGVLLADNYPVFTATLSKADVENVDTVIEQLQPILELTQEDVDRFKSRIKTARKTERVAIKLNLTETNIAKFSEVKYKFPGVRIETQMTRYYPHGDLFAHVIGYVGRINDKELKSIDKDLYAGTNLIGKIGVEKSYEDLLHGTPGYESVEADAHSNILRHLGRKDPTRGNDLYLSLDYGLQVVASQQLAGRRGAIVAIDPRTGEILALVSSPSFNPNLFVTGINHKDYSSLRDNIDQPLYNRAVQGVYPPGSTIKPMEAMGGLHYGIVDWATAISDPGYFHLPGDSHKFRDWKKTGHGIVNMHKAIIMSCDTYFYILANQMGIDQMNQWMRQFGFGQKTGVDLPSESEGLYPNPEWKMRTRKSKWMKGETISVSIGQGAFTATPLQLAMATAITANHGSHVVPHVLRATHGAKPFTVRNAPDGKINFNGTDEDWVKMREAMIDVIQSGTGRGIRTPLYQIAGKTGTAQVKSIAQGKRYNEAALSERQLDHGLFVGFAPADKPEIAIAVIWENGRHGGSAAQLAKPVFDYWLLTRKKNPIRPANHQVNGGLMTAGIKPGELPSGNESASSTPATSAPTSAAASTPQATPTRPATNEVDE</sequence>
<protein>
    <recommendedName>
        <fullName evidence="1 5">Peptidoglycan D,D-transpeptidase MrdA</fullName>
        <ecNumber evidence="1">3.4.16.4</ecNumber>
    </recommendedName>
    <alternativeName>
        <fullName evidence="4">Class B penicillin-binding protein 2</fullName>
        <shortName evidence="4">bPBP2</shortName>
    </alternativeName>
    <alternativeName>
        <fullName evidence="1 4">Penicillin-binding protein 2</fullName>
        <shortName evidence="1">PBP-2</shortName>
        <shortName evidence="4">PBP2</shortName>
    </alternativeName>
</protein>
<organism evidence="6 7">
    <name type="scientific">Acinetobacter baumannii (strain ATCC 19606 / DSM 30007 / JCM 6841 / CCUG 19606 / CIP 70.34 / NBRC 109757 / NCIMB 12457 / NCTC 12156 / 81)</name>
    <dbReference type="NCBI Taxonomy" id="575584"/>
    <lineage>
        <taxon>Bacteria</taxon>
        <taxon>Pseudomonadati</taxon>
        <taxon>Pseudomonadota</taxon>
        <taxon>Gammaproteobacteria</taxon>
        <taxon>Moraxellales</taxon>
        <taxon>Moraxellaceae</taxon>
        <taxon>Acinetobacter</taxon>
        <taxon>Acinetobacter calcoaceticus/baumannii complex</taxon>
    </lineage>
</organism>
<name>MRDA_ACIB2</name>
<keyword id="KW-0002">3D-structure</keyword>
<keyword id="KW-0121">Carboxypeptidase</keyword>
<keyword id="KW-0997">Cell inner membrane</keyword>
<keyword id="KW-1003">Cell membrane</keyword>
<keyword id="KW-0133">Cell shape</keyword>
<keyword id="KW-0961">Cell wall biogenesis/degradation</keyword>
<keyword id="KW-0378">Hydrolase</keyword>
<keyword id="KW-0472">Membrane</keyword>
<keyword id="KW-0479">Metal-binding</keyword>
<keyword id="KW-0573">Peptidoglycan synthesis</keyword>
<keyword id="KW-0645">Protease</keyword>
<keyword id="KW-1185">Reference proteome</keyword>
<keyword id="KW-0812">Transmembrane</keyword>
<keyword id="KW-1133">Transmembrane helix</keyword>
<keyword id="KW-0862">Zinc</keyword>
<comment type="function">
    <text evidence="1 3">Catalyzes cross-linking of the peptidoglycan cell wall (By similarity). Involved in the determination of the rod shape of the cell (PubMed:36787358).</text>
</comment>
<comment type="catalytic activity">
    <reaction evidence="1">
        <text>Preferential cleavage: (Ac)2-L-Lys-D-Ala-|-D-Ala. Also transpeptidation of peptidyl-alanyl moieties that are N-acyl substituents of D-alanine.</text>
        <dbReference type="EC" id="3.4.16.4"/>
    </reaction>
</comment>
<comment type="cofactor">
    <cofactor evidence="3">
        <name>Zn(2+)</name>
        <dbReference type="ChEBI" id="CHEBI:29105"/>
    </cofactor>
    <text evidence="3">Binds one Zn(2+) ion per subunit.</text>
</comment>
<comment type="activity regulation">
    <text evidence="3">Inhibited by the beta-lactams sulbactam and piperacillin-tazobactam.</text>
</comment>
<comment type="pathway">
    <text evidence="1">Cell wall biogenesis; peptidoglycan biosynthesis.</text>
</comment>
<comment type="subunit">
    <text evidence="3">Monomer.</text>
</comment>
<comment type="subcellular location">
    <subcellularLocation>
        <location evidence="1">Cell inner membrane</location>
        <topology evidence="1">Single-pass membrane protein</topology>
    </subcellularLocation>
</comment>
<comment type="disruption phenotype">
    <text evidence="3">Viable under standard laboratory conditions. Spherical cell shape with increased maximal cell width.</text>
</comment>
<comment type="similarity">
    <text evidence="1">Belongs to the transpeptidase family. MrdA subfamily.</text>
</comment>
<reference evidence="7" key="1">
    <citation type="journal article" date="2012" name="PLoS ONE">
        <title>The success of Acinetobacter species; genetic, metabolic and virulence attributes.</title>
        <authorList>
            <person name="Peleg A.Y."/>
            <person name="de Breij A."/>
            <person name="Adams M.D."/>
            <person name="Cerqueira G.M."/>
            <person name="Mocali S."/>
            <person name="Galardini M."/>
            <person name="Nibbering P.H."/>
            <person name="Earl A.M."/>
            <person name="Ward D.V."/>
            <person name="Paterson D.L."/>
            <person name="Seifert H."/>
            <person name="Dijkshoorn L."/>
        </authorList>
    </citation>
    <scope>NUCLEOTIDE SEQUENCE [LARGE SCALE GENOMIC DNA]</scope>
    <source>
        <strain evidence="7">ATCC 19606 / DSM 30007 / JCM 6841 / CCUG 19606 / CIP 70.34 / NBRC 109757 / NCIMB 12457 / NCTC 12156 / 81</strain>
    </source>
</reference>
<reference evidence="8" key="2">
    <citation type="journal article" date="2023" name="Proc. Natl. Acad. Sci. U.S.A.">
        <title>A conserved zinc-binding site in Acinetobacter baumannii PBP2 required for elongasome-directed bacterial cell shape.</title>
        <authorList>
            <person name="Micelli C."/>
            <person name="Dai Y."/>
            <person name="Raustad N."/>
            <person name="Isberg R.R."/>
            <person name="Dowson C.G."/>
            <person name="Lloyd A.J."/>
            <person name="Geisinger E."/>
            <person name="Crow A."/>
            <person name="Roper D.I."/>
        </authorList>
    </citation>
    <scope>X-RAY CRYSTALLOGRAPHY (2.65 ANGSTROMS) OF 53-672 IN COMPLEX WITH ZN(2+)</scope>
    <scope>FUNCTION</scope>
    <scope>COFACTOR</scope>
    <scope>ACTIVITY REGULATION</scope>
    <scope>SUBUNIT</scope>
    <scope>DISRUPTION PHENOTYPE</scope>
    <scope>MUTAGENESIS OF ASP-350; ASP-365; HIS-371 AND CYS-384</scope>
    <source>
        <strain>ATCC 17978 / DSM 105126 / CIP 53.77 / LMG 1025 / NCDC KC755 / 5377</strain>
        <strain>ATCC 19606 / DSM 30007 / JCM 6841 / CCUG 19606 / CIP 70.34 / NBRC 109757 / NCIMB 12457 / NCTC 12156 / 81</strain>
    </source>
</reference>
<proteinExistence type="evidence at protein level"/>
<accession>D0C8Z9</accession>
<gene>
    <name evidence="1 6" type="primary">mrdA</name>
    <name evidence="6" type="ORF">HMPREF0010_01557</name>
</gene>
<evidence type="ECO:0000255" key="1">
    <source>
        <dbReference type="HAMAP-Rule" id="MF_02081"/>
    </source>
</evidence>
<evidence type="ECO:0000256" key="2">
    <source>
        <dbReference type="SAM" id="MobiDB-lite"/>
    </source>
</evidence>
<evidence type="ECO:0000269" key="3">
    <source>
    </source>
</evidence>
<evidence type="ECO:0000303" key="4">
    <source>
    </source>
</evidence>
<evidence type="ECO:0000305" key="5"/>
<evidence type="ECO:0000312" key="6">
    <source>
        <dbReference type="EMBL" id="EEX04163.1"/>
    </source>
</evidence>
<evidence type="ECO:0000312" key="7">
    <source>
        <dbReference type="Proteomes" id="UP000005740"/>
    </source>
</evidence>
<evidence type="ECO:0007744" key="8">
    <source>
        <dbReference type="PDB" id="7ZG8"/>
    </source>
</evidence>
<evidence type="ECO:0007829" key="9">
    <source>
        <dbReference type="PDB" id="8ZPC"/>
    </source>
</evidence>
<dbReference type="EC" id="3.4.16.4" evidence="1"/>
<dbReference type="EMBL" id="GG704573">
    <property type="protein sequence ID" value="EEX04163.1"/>
    <property type="molecule type" value="Genomic_DNA"/>
</dbReference>
<dbReference type="RefSeq" id="WP_000809155.1">
    <property type="nucleotide sequence ID" value="NZ_MJHA01000009.1"/>
</dbReference>
<dbReference type="PDB" id="7ZG8">
    <property type="method" value="X-ray"/>
    <property type="resolution" value="2.65 A"/>
    <property type="chains" value="AAA/BBB=53-672"/>
</dbReference>
<dbReference type="PDB" id="8ZPC">
    <property type="method" value="X-ray"/>
    <property type="resolution" value="3.31 A"/>
    <property type="chains" value="A/B=42-672"/>
</dbReference>
<dbReference type="PDBsum" id="7ZG8"/>
<dbReference type="PDBsum" id="8ZPC"/>
<dbReference type="SMR" id="D0C8Z9"/>
<dbReference type="GeneID" id="92892983"/>
<dbReference type="PATRIC" id="fig|575584.18.peg.3049"/>
<dbReference type="UniPathway" id="UPA00219"/>
<dbReference type="Proteomes" id="UP000005740">
    <property type="component" value="Unassembled WGS sequence"/>
</dbReference>
<dbReference type="GO" id="GO:0005886">
    <property type="term" value="C:plasma membrane"/>
    <property type="evidence" value="ECO:0007669"/>
    <property type="project" value="UniProtKB-SubCell"/>
</dbReference>
<dbReference type="GO" id="GO:0008658">
    <property type="term" value="F:penicillin binding"/>
    <property type="evidence" value="ECO:0007669"/>
    <property type="project" value="InterPro"/>
</dbReference>
<dbReference type="GO" id="GO:0071972">
    <property type="term" value="F:peptidoglycan L,D-transpeptidase activity"/>
    <property type="evidence" value="ECO:0007669"/>
    <property type="project" value="TreeGrafter"/>
</dbReference>
<dbReference type="GO" id="GO:0009002">
    <property type="term" value="F:serine-type D-Ala-D-Ala carboxypeptidase activity"/>
    <property type="evidence" value="ECO:0007669"/>
    <property type="project" value="UniProtKB-UniRule"/>
</dbReference>
<dbReference type="GO" id="GO:0008270">
    <property type="term" value="F:zinc ion binding"/>
    <property type="evidence" value="ECO:0007669"/>
    <property type="project" value="UniProtKB-UniRule"/>
</dbReference>
<dbReference type="GO" id="GO:0071555">
    <property type="term" value="P:cell wall organization"/>
    <property type="evidence" value="ECO:0007669"/>
    <property type="project" value="UniProtKB-KW"/>
</dbReference>
<dbReference type="GO" id="GO:0009252">
    <property type="term" value="P:peptidoglycan biosynthetic process"/>
    <property type="evidence" value="ECO:0007669"/>
    <property type="project" value="UniProtKB-UniRule"/>
</dbReference>
<dbReference type="GO" id="GO:0006508">
    <property type="term" value="P:proteolysis"/>
    <property type="evidence" value="ECO:0007669"/>
    <property type="project" value="UniProtKB-KW"/>
</dbReference>
<dbReference type="GO" id="GO:0008360">
    <property type="term" value="P:regulation of cell shape"/>
    <property type="evidence" value="ECO:0007669"/>
    <property type="project" value="UniProtKB-KW"/>
</dbReference>
<dbReference type="FunFam" id="3.40.710.10:FF:000024">
    <property type="entry name" value="Penicillin-binding protein 2"/>
    <property type="match status" value="1"/>
</dbReference>
<dbReference type="Gene3D" id="3.40.710.10">
    <property type="entry name" value="DD-peptidase/beta-lactamase superfamily"/>
    <property type="match status" value="1"/>
</dbReference>
<dbReference type="Gene3D" id="3.90.1310.10">
    <property type="entry name" value="Penicillin-binding protein 2a (Domain 2)"/>
    <property type="match status" value="1"/>
</dbReference>
<dbReference type="Gene3D" id="3.30.1390.30">
    <property type="entry name" value="Penicillin-binding protein 2a, domain 3"/>
    <property type="match status" value="1"/>
</dbReference>
<dbReference type="HAMAP" id="MF_02081">
    <property type="entry name" value="MrdA_transpept"/>
    <property type="match status" value="1"/>
</dbReference>
<dbReference type="InterPro" id="IPR050515">
    <property type="entry name" value="Bact_Transpept/Beta-Lactamase"/>
</dbReference>
<dbReference type="InterPro" id="IPR012338">
    <property type="entry name" value="Beta-lactam/transpept-like"/>
</dbReference>
<dbReference type="InterPro" id="IPR005311">
    <property type="entry name" value="PBP_dimer"/>
</dbReference>
<dbReference type="InterPro" id="IPR036138">
    <property type="entry name" value="PBP_dimer_sf"/>
</dbReference>
<dbReference type="InterPro" id="IPR001460">
    <property type="entry name" value="PCN-bd_Tpept"/>
</dbReference>
<dbReference type="InterPro" id="IPR017790">
    <property type="entry name" value="Penicillin-binding_protein_2"/>
</dbReference>
<dbReference type="NCBIfam" id="TIGR03423">
    <property type="entry name" value="pbp2_mrdA"/>
    <property type="match status" value="1"/>
</dbReference>
<dbReference type="PANTHER" id="PTHR30627">
    <property type="entry name" value="PEPTIDOGLYCAN D,D-TRANSPEPTIDASE"/>
    <property type="match status" value="1"/>
</dbReference>
<dbReference type="PANTHER" id="PTHR30627:SF2">
    <property type="entry name" value="PEPTIDOGLYCAN D,D-TRANSPEPTIDASE MRDA"/>
    <property type="match status" value="1"/>
</dbReference>
<dbReference type="Pfam" id="PF03717">
    <property type="entry name" value="PBP_dimer"/>
    <property type="match status" value="1"/>
</dbReference>
<dbReference type="Pfam" id="PF00905">
    <property type="entry name" value="Transpeptidase"/>
    <property type="match status" value="1"/>
</dbReference>
<dbReference type="SUPFAM" id="SSF56601">
    <property type="entry name" value="beta-lactamase/transpeptidase-like"/>
    <property type="match status" value="1"/>
</dbReference>
<dbReference type="SUPFAM" id="SSF56519">
    <property type="entry name" value="Penicillin binding protein dimerisation domain"/>
    <property type="match status" value="1"/>
</dbReference>